<organism>
    <name type="scientific">Brucella anthropi (strain ATCC 49188 / DSM 6882 / CCUG 24695 / JCM 21032 / LMG 3331 / NBRC 15819 / NCTC 12168 / Alc 37)</name>
    <name type="common">Ochrobactrum anthropi</name>
    <dbReference type="NCBI Taxonomy" id="439375"/>
    <lineage>
        <taxon>Bacteria</taxon>
        <taxon>Pseudomonadati</taxon>
        <taxon>Pseudomonadota</taxon>
        <taxon>Alphaproteobacteria</taxon>
        <taxon>Hyphomicrobiales</taxon>
        <taxon>Brucellaceae</taxon>
        <taxon>Brucella/Ochrobactrum group</taxon>
        <taxon>Brucella</taxon>
    </lineage>
</organism>
<proteinExistence type="inferred from homology"/>
<comment type="subcellular location">
    <subcellularLocation>
        <location evidence="1">Cell inner membrane</location>
        <topology evidence="1">Multi-pass membrane protein</topology>
    </subcellularLocation>
</comment>
<comment type="similarity">
    <text evidence="1">Belongs to the UPF0283 family.</text>
</comment>
<feature type="chain" id="PRO_1000064846" description="UPF0283 membrane protein Oant_2119">
    <location>
        <begin position="1"/>
        <end position="360"/>
    </location>
</feature>
<feature type="transmembrane region" description="Helical" evidence="1">
    <location>
        <begin position="77"/>
        <end position="97"/>
    </location>
</feature>
<feature type="transmembrane region" description="Helical" evidence="1">
    <location>
        <begin position="108"/>
        <end position="128"/>
    </location>
</feature>
<feature type="region of interest" description="Disordered" evidence="2">
    <location>
        <begin position="1"/>
        <end position="30"/>
    </location>
</feature>
<protein>
    <recommendedName>
        <fullName evidence="1">UPF0283 membrane protein Oant_2119</fullName>
    </recommendedName>
</protein>
<dbReference type="EMBL" id="CP000758">
    <property type="protein sequence ID" value="ABS14835.1"/>
    <property type="molecule type" value="Genomic_DNA"/>
</dbReference>
<dbReference type="RefSeq" id="WP_012092020.1">
    <property type="nucleotide sequence ID" value="NC_009667.1"/>
</dbReference>
<dbReference type="SMR" id="A6X0T1"/>
<dbReference type="STRING" id="439375.Oant_2119"/>
<dbReference type="KEGG" id="oan:Oant_2119"/>
<dbReference type="PATRIC" id="fig|439375.7.peg.2225"/>
<dbReference type="eggNOG" id="COG3768">
    <property type="taxonomic scope" value="Bacteria"/>
</dbReference>
<dbReference type="HOGENOM" id="CLU_057693_1_0_5"/>
<dbReference type="Proteomes" id="UP000002301">
    <property type="component" value="Chromosome 1"/>
</dbReference>
<dbReference type="GO" id="GO:0005886">
    <property type="term" value="C:plasma membrane"/>
    <property type="evidence" value="ECO:0007669"/>
    <property type="project" value="UniProtKB-SubCell"/>
</dbReference>
<dbReference type="HAMAP" id="MF_01085">
    <property type="entry name" value="UPF0283"/>
    <property type="match status" value="1"/>
</dbReference>
<dbReference type="InterPro" id="IPR021147">
    <property type="entry name" value="DUF697"/>
</dbReference>
<dbReference type="InterPro" id="IPR006507">
    <property type="entry name" value="UPF0283"/>
</dbReference>
<dbReference type="NCBIfam" id="TIGR01620">
    <property type="entry name" value="hyp_HI0043"/>
    <property type="match status" value="1"/>
</dbReference>
<dbReference type="PANTHER" id="PTHR39342">
    <property type="entry name" value="UPF0283 MEMBRANE PROTEIN YCJF"/>
    <property type="match status" value="1"/>
</dbReference>
<dbReference type="PANTHER" id="PTHR39342:SF1">
    <property type="entry name" value="UPF0283 MEMBRANE PROTEIN YCJF"/>
    <property type="match status" value="1"/>
</dbReference>
<dbReference type="Pfam" id="PF05128">
    <property type="entry name" value="DUF697"/>
    <property type="match status" value="1"/>
</dbReference>
<accession>A6X0T1</accession>
<sequence>MTEKTPRKPASFTVSQASNRPEAADEAPRRPRAVRDLDVVVAQPDVFALSEEEAAELEILDPSFEAPERKGWSLSRILFGALGILVSFAIGIWTEDLIRALFSRADWLGWTALGVAIIALAAFIAIVVRELVALRRLASVQHLRKDAADAAERDDMAAARKAVDALRSIAAGLPETARGRQLLDGLTDDIIDGRNLIQLAETEILRPLDREARTLILNASKRVSIVTAISPRALVDIGYVIFESARLIRRLSQLYGGRPGTLGFLKLARRVIAHLAVTGTLAMGDSVIQQLVGHGLASRLSAKLGEGVVNGLMTARIGIAAMDVVRPFPFNAEKRPGIGDFIGDLVKINGERPDKKHPGK</sequence>
<keyword id="KW-0997">Cell inner membrane</keyword>
<keyword id="KW-1003">Cell membrane</keyword>
<keyword id="KW-0472">Membrane</keyword>
<keyword id="KW-1185">Reference proteome</keyword>
<keyword id="KW-0812">Transmembrane</keyword>
<keyword id="KW-1133">Transmembrane helix</keyword>
<evidence type="ECO:0000255" key="1">
    <source>
        <dbReference type="HAMAP-Rule" id="MF_01085"/>
    </source>
</evidence>
<evidence type="ECO:0000256" key="2">
    <source>
        <dbReference type="SAM" id="MobiDB-lite"/>
    </source>
</evidence>
<reference key="1">
    <citation type="journal article" date="2011" name="J. Bacteriol.">
        <title>Genome of Ochrobactrum anthropi ATCC 49188 T, a versatile opportunistic pathogen and symbiont of several eukaryotic hosts.</title>
        <authorList>
            <person name="Chain P.S."/>
            <person name="Lang D.M."/>
            <person name="Comerci D.J."/>
            <person name="Malfatti S.A."/>
            <person name="Vergez L.M."/>
            <person name="Shin M."/>
            <person name="Ugalde R.A."/>
            <person name="Garcia E."/>
            <person name="Tolmasky M.E."/>
        </authorList>
    </citation>
    <scope>NUCLEOTIDE SEQUENCE [LARGE SCALE GENOMIC DNA]</scope>
    <source>
        <strain>ATCC 49188 / DSM 6882 / CCUG 24695 / JCM 21032 / LMG 3331 / NBRC 15819 / NCTC 12168 / Alc 37</strain>
    </source>
</reference>
<name>Y2119_BRUA4</name>
<gene>
    <name type="ordered locus">Oant_2119</name>
</gene>